<name>GCH1_COXBN</name>
<reference key="1">
    <citation type="journal article" date="2009" name="Infect. Immun.">
        <title>Comparative genomics reveal extensive transposon-mediated genomic plasticity and diversity among potential effector proteins within the genus Coxiella.</title>
        <authorList>
            <person name="Beare P.A."/>
            <person name="Unsworth N."/>
            <person name="Andoh M."/>
            <person name="Voth D.E."/>
            <person name="Omsland A."/>
            <person name="Gilk S.D."/>
            <person name="Williams K.P."/>
            <person name="Sobral B.W."/>
            <person name="Kupko J.J. III"/>
            <person name="Porcella S.F."/>
            <person name="Samuel J.E."/>
            <person name="Heinzen R.A."/>
        </authorList>
    </citation>
    <scope>NUCLEOTIDE SEQUENCE [LARGE SCALE GENOMIC DNA]</scope>
    <source>
        <strain>Dugway 5J108-111</strain>
    </source>
</reference>
<gene>
    <name evidence="1" type="primary">folE</name>
    <name type="ordered locus">CBUD_0863</name>
</gene>
<comment type="catalytic activity">
    <reaction evidence="1">
        <text>GTP + H2O = 7,8-dihydroneopterin 3'-triphosphate + formate + H(+)</text>
        <dbReference type="Rhea" id="RHEA:17473"/>
        <dbReference type="ChEBI" id="CHEBI:15377"/>
        <dbReference type="ChEBI" id="CHEBI:15378"/>
        <dbReference type="ChEBI" id="CHEBI:15740"/>
        <dbReference type="ChEBI" id="CHEBI:37565"/>
        <dbReference type="ChEBI" id="CHEBI:58462"/>
        <dbReference type="EC" id="3.5.4.16"/>
    </reaction>
</comment>
<comment type="pathway">
    <text evidence="1">Cofactor biosynthesis; 7,8-dihydroneopterin triphosphate biosynthesis; 7,8-dihydroneopterin triphosphate from GTP: step 1/1.</text>
</comment>
<comment type="subunit">
    <text evidence="1">Homomer.</text>
</comment>
<comment type="similarity">
    <text evidence="1">Belongs to the GTP cyclohydrolase I family.</text>
</comment>
<comment type="sequence caution" evidence="2">
    <conflict type="erroneous initiation">
        <sequence resource="EMBL-CDS" id="ABS76861"/>
    </conflict>
</comment>
<proteinExistence type="inferred from homology"/>
<protein>
    <recommendedName>
        <fullName evidence="1">GTP cyclohydrolase 1</fullName>
        <ecNumber evidence="1">3.5.4.16</ecNumber>
    </recommendedName>
    <alternativeName>
        <fullName evidence="1">GTP cyclohydrolase I</fullName>
        <shortName evidence="1">GTP-CH-I</shortName>
    </alternativeName>
</protein>
<sequence length="184" mass="20777">MSNTIADHVKAILIALGEDPNREGLRDTPKRYEKALEHLTKGYHEKLPSVVKKAVFQSGMDEMVILKDIELYSLCEHHLLPFIGRCHVAYLPSGKIIGISKLARIVDMFAKRLQVQENLTKQIAEAILTATEAKGVGVIIEAKHLCMMMRGVEKQNSEMTTSVMLGTFRKDDRTRSEFLSLIRK</sequence>
<dbReference type="EC" id="3.5.4.16" evidence="1"/>
<dbReference type="EMBL" id="CP000733">
    <property type="protein sequence ID" value="ABS76861.2"/>
    <property type="status" value="ALT_INIT"/>
    <property type="molecule type" value="Genomic_DNA"/>
</dbReference>
<dbReference type="SMR" id="A9KFF3"/>
<dbReference type="KEGG" id="cbd:CBUD_0863"/>
<dbReference type="HOGENOM" id="CLU_049768_3_1_6"/>
<dbReference type="UniPathway" id="UPA00848">
    <property type="reaction ID" value="UER00151"/>
</dbReference>
<dbReference type="Proteomes" id="UP000008555">
    <property type="component" value="Chromosome"/>
</dbReference>
<dbReference type="GO" id="GO:0005737">
    <property type="term" value="C:cytoplasm"/>
    <property type="evidence" value="ECO:0007669"/>
    <property type="project" value="TreeGrafter"/>
</dbReference>
<dbReference type="GO" id="GO:0005525">
    <property type="term" value="F:GTP binding"/>
    <property type="evidence" value="ECO:0007669"/>
    <property type="project" value="UniProtKB-KW"/>
</dbReference>
<dbReference type="GO" id="GO:0003934">
    <property type="term" value="F:GTP cyclohydrolase I activity"/>
    <property type="evidence" value="ECO:0007669"/>
    <property type="project" value="UniProtKB-UniRule"/>
</dbReference>
<dbReference type="GO" id="GO:0008270">
    <property type="term" value="F:zinc ion binding"/>
    <property type="evidence" value="ECO:0007669"/>
    <property type="project" value="UniProtKB-UniRule"/>
</dbReference>
<dbReference type="GO" id="GO:0006730">
    <property type="term" value="P:one-carbon metabolic process"/>
    <property type="evidence" value="ECO:0007669"/>
    <property type="project" value="UniProtKB-UniRule"/>
</dbReference>
<dbReference type="GO" id="GO:0006729">
    <property type="term" value="P:tetrahydrobiopterin biosynthetic process"/>
    <property type="evidence" value="ECO:0007669"/>
    <property type="project" value="TreeGrafter"/>
</dbReference>
<dbReference type="GO" id="GO:0046654">
    <property type="term" value="P:tetrahydrofolate biosynthetic process"/>
    <property type="evidence" value="ECO:0007669"/>
    <property type="project" value="UniProtKB-UniRule"/>
</dbReference>
<dbReference type="FunFam" id="3.30.1130.10:FF:000001">
    <property type="entry name" value="GTP cyclohydrolase 1"/>
    <property type="match status" value="1"/>
</dbReference>
<dbReference type="Gene3D" id="1.10.286.10">
    <property type="match status" value="1"/>
</dbReference>
<dbReference type="Gene3D" id="3.30.1130.10">
    <property type="match status" value="1"/>
</dbReference>
<dbReference type="HAMAP" id="MF_00223">
    <property type="entry name" value="FolE"/>
    <property type="match status" value="1"/>
</dbReference>
<dbReference type="InterPro" id="IPR043133">
    <property type="entry name" value="GTP-CH-I_C/QueF"/>
</dbReference>
<dbReference type="InterPro" id="IPR043134">
    <property type="entry name" value="GTP-CH-I_N"/>
</dbReference>
<dbReference type="InterPro" id="IPR001474">
    <property type="entry name" value="GTP_CycHdrlase_I"/>
</dbReference>
<dbReference type="InterPro" id="IPR018234">
    <property type="entry name" value="GTP_CycHdrlase_I_CS"/>
</dbReference>
<dbReference type="InterPro" id="IPR020602">
    <property type="entry name" value="GTP_CycHdrlase_I_dom"/>
</dbReference>
<dbReference type="NCBIfam" id="TIGR00063">
    <property type="entry name" value="folE"/>
    <property type="match status" value="1"/>
</dbReference>
<dbReference type="NCBIfam" id="NF006825">
    <property type="entry name" value="PRK09347.1-2"/>
    <property type="match status" value="1"/>
</dbReference>
<dbReference type="NCBIfam" id="NF006826">
    <property type="entry name" value="PRK09347.1-3"/>
    <property type="match status" value="1"/>
</dbReference>
<dbReference type="PANTHER" id="PTHR11109:SF7">
    <property type="entry name" value="GTP CYCLOHYDROLASE 1"/>
    <property type="match status" value="1"/>
</dbReference>
<dbReference type="PANTHER" id="PTHR11109">
    <property type="entry name" value="GTP CYCLOHYDROLASE I"/>
    <property type="match status" value="1"/>
</dbReference>
<dbReference type="Pfam" id="PF01227">
    <property type="entry name" value="GTP_cyclohydroI"/>
    <property type="match status" value="1"/>
</dbReference>
<dbReference type="SUPFAM" id="SSF55620">
    <property type="entry name" value="Tetrahydrobiopterin biosynthesis enzymes-like"/>
    <property type="match status" value="1"/>
</dbReference>
<dbReference type="PROSITE" id="PS00859">
    <property type="entry name" value="GTP_CYCLOHYDROL_1_1"/>
    <property type="match status" value="1"/>
</dbReference>
<dbReference type="PROSITE" id="PS00860">
    <property type="entry name" value="GTP_CYCLOHYDROL_1_2"/>
    <property type="match status" value="1"/>
</dbReference>
<accession>A9KFF3</accession>
<keyword id="KW-0342">GTP-binding</keyword>
<keyword id="KW-0378">Hydrolase</keyword>
<keyword id="KW-0479">Metal-binding</keyword>
<keyword id="KW-0547">Nucleotide-binding</keyword>
<keyword id="KW-0554">One-carbon metabolism</keyword>
<keyword id="KW-0862">Zinc</keyword>
<organism>
    <name type="scientific">Coxiella burnetii (strain Dugway 5J108-111)</name>
    <dbReference type="NCBI Taxonomy" id="434922"/>
    <lineage>
        <taxon>Bacteria</taxon>
        <taxon>Pseudomonadati</taxon>
        <taxon>Pseudomonadota</taxon>
        <taxon>Gammaproteobacteria</taxon>
        <taxon>Legionellales</taxon>
        <taxon>Coxiellaceae</taxon>
        <taxon>Coxiella</taxon>
    </lineage>
</organism>
<feature type="chain" id="PRO_1000078138" description="GTP cyclohydrolase 1">
    <location>
        <begin position="1"/>
        <end position="184"/>
    </location>
</feature>
<feature type="binding site" evidence="1">
    <location>
        <position position="75"/>
    </location>
    <ligand>
        <name>Zn(2+)</name>
        <dbReference type="ChEBI" id="CHEBI:29105"/>
    </ligand>
</feature>
<feature type="binding site" evidence="1">
    <location>
        <position position="78"/>
    </location>
    <ligand>
        <name>Zn(2+)</name>
        <dbReference type="ChEBI" id="CHEBI:29105"/>
    </ligand>
</feature>
<feature type="binding site" evidence="1">
    <location>
        <position position="146"/>
    </location>
    <ligand>
        <name>Zn(2+)</name>
        <dbReference type="ChEBI" id="CHEBI:29105"/>
    </ligand>
</feature>
<evidence type="ECO:0000255" key="1">
    <source>
        <dbReference type="HAMAP-Rule" id="MF_00223"/>
    </source>
</evidence>
<evidence type="ECO:0000305" key="2"/>